<feature type="chain" id="PRO_1000055389" description="Large ribosomal subunit protein uL13">
    <location>
        <begin position="1"/>
        <end position="142"/>
    </location>
</feature>
<gene>
    <name evidence="1" type="primary">rplM</name>
    <name type="ordered locus">Hhal_2077</name>
</gene>
<evidence type="ECO:0000255" key="1">
    <source>
        <dbReference type="HAMAP-Rule" id="MF_01366"/>
    </source>
</evidence>
<evidence type="ECO:0000305" key="2"/>
<organism>
    <name type="scientific">Halorhodospira halophila (strain DSM 244 / SL1)</name>
    <name type="common">Ectothiorhodospira halophila (strain DSM 244 / SL1)</name>
    <dbReference type="NCBI Taxonomy" id="349124"/>
    <lineage>
        <taxon>Bacteria</taxon>
        <taxon>Pseudomonadati</taxon>
        <taxon>Pseudomonadota</taxon>
        <taxon>Gammaproteobacteria</taxon>
        <taxon>Chromatiales</taxon>
        <taxon>Ectothiorhodospiraceae</taxon>
        <taxon>Halorhodospira</taxon>
    </lineage>
</organism>
<reference key="1">
    <citation type="submission" date="2006-12" db="EMBL/GenBank/DDBJ databases">
        <title>Complete sequence of Halorhodospira halophila SL1.</title>
        <authorList>
            <consortium name="US DOE Joint Genome Institute"/>
            <person name="Copeland A."/>
            <person name="Lucas S."/>
            <person name="Lapidus A."/>
            <person name="Barry K."/>
            <person name="Detter J.C."/>
            <person name="Glavina del Rio T."/>
            <person name="Hammon N."/>
            <person name="Israni S."/>
            <person name="Dalin E."/>
            <person name="Tice H."/>
            <person name="Pitluck S."/>
            <person name="Saunders E."/>
            <person name="Brettin T."/>
            <person name="Bruce D."/>
            <person name="Han C."/>
            <person name="Tapia R."/>
            <person name="Schmutz J."/>
            <person name="Larimer F."/>
            <person name="Land M."/>
            <person name="Hauser L."/>
            <person name="Kyrpides N."/>
            <person name="Mikhailova N."/>
            <person name="Hoff W."/>
            <person name="Richardson P."/>
        </authorList>
    </citation>
    <scope>NUCLEOTIDE SEQUENCE [LARGE SCALE GENOMIC DNA]</scope>
    <source>
        <strain>DSM 244 / SL1</strain>
    </source>
</reference>
<protein>
    <recommendedName>
        <fullName evidence="1">Large ribosomal subunit protein uL13</fullName>
    </recommendedName>
    <alternativeName>
        <fullName evidence="2">50S ribosomal protein L13</fullName>
    </alternativeName>
</protein>
<dbReference type="EMBL" id="CP000544">
    <property type="protein sequence ID" value="ABM62841.1"/>
    <property type="molecule type" value="Genomic_DNA"/>
</dbReference>
<dbReference type="RefSeq" id="WP_011814863.1">
    <property type="nucleotide sequence ID" value="NC_008789.1"/>
</dbReference>
<dbReference type="SMR" id="A1WYS9"/>
<dbReference type="STRING" id="349124.Hhal_2077"/>
<dbReference type="KEGG" id="hha:Hhal_2077"/>
<dbReference type="eggNOG" id="COG0102">
    <property type="taxonomic scope" value="Bacteria"/>
</dbReference>
<dbReference type="HOGENOM" id="CLU_082184_2_2_6"/>
<dbReference type="OrthoDB" id="9801330at2"/>
<dbReference type="Proteomes" id="UP000000647">
    <property type="component" value="Chromosome"/>
</dbReference>
<dbReference type="GO" id="GO:0022625">
    <property type="term" value="C:cytosolic large ribosomal subunit"/>
    <property type="evidence" value="ECO:0007669"/>
    <property type="project" value="TreeGrafter"/>
</dbReference>
<dbReference type="GO" id="GO:0003729">
    <property type="term" value="F:mRNA binding"/>
    <property type="evidence" value="ECO:0007669"/>
    <property type="project" value="TreeGrafter"/>
</dbReference>
<dbReference type="GO" id="GO:0003735">
    <property type="term" value="F:structural constituent of ribosome"/>
    <property type="evidence" value="ECO:0007669"/>
    <property type="project" value="InterPro"/>
</dbReference>
<dbReference type="GO" id="GO:0017148">
    <property type="term" value="P:negative regulation of translation"/>
    <property type="evidence" value="ECO:0007669"/>
    <property type="project" value="TreeGrafter"/>
</dbReference>
<dbReference type="GO" id="GO:0006412">
    <property type="term" value="P:translation"/>
    <property type="evidence" value="ECO:0007669"/>
    <property type="project" value="UniProtKB-UniRule"/>
</dbReference>
<dbReference type="CDD" id="cd00392">
    <property type="entry name" value="Ribosomal_L13"/>
    <property type="match status" value="1"/>
</dbReference>
<dbReference type="FunFam" id="3.90.1180.10:FF:000001">
    <property type="entry name" value="50S ribosomal protein L13"/>
    <property type="match status" value="1"/>
</dbReference>
<dbReference type="Gene3D" id="3.90.1180.10">
    <property type="entry name" value="Ribosomal protein L13"/>
    <property type="match status" value="1"/>
</dbReference>
<dbReference type="HAMAP" id="MF_01366">
    <property type="entry name" value="Ribosomal_uL13"/>
    <property type="match status" value="1"/>
</dbReference>
<dbReference type="InterPro" id="IPR005822">
    <property type="entry name" value="Ribosomal_uL13"/>
</dbReference>
<dbReference type="InterPro" id="IPR005823">
    <property type="entry name" value="Ribosomal_uL13_bac-type"/>
</dbReference>
<dbReference type="InterPro" id="IPR036899">
    <property type="entry name" value="Ribosomal_uL13_sf"/>
</dbReference>
<dbReference type="NCBIfam" id="TIGR01066">
    <property type="entry name" value="rplM_bact"/>
    <property type="match status" value="1"/>
</dbReference>
<dbReference type="PANTHER" id="PTHR11545:SF2">
    <property type="entry name" value="LARGE RIBOSOMAL SUBUNIT PROTEIN UL13M"/>
    <property type="match status" value="1"/>
</dbReference>
<dbReference type="PANTHER" id="PTHR11545">
    <property type="entry name" value="RIBOSOMAL PROTEIN L13"/>
    <property type="match status" value="1"/>
</dbReference>
<dbReference type="Pfam" id="PF00572">
    <property type="entry name" value="Ribosomal_L13"/>
    <property type="match status" value="1"/>
</dbReference>
<dbReference type="PIRSF" id="PIRSF002181">
    <property type="entry name" value="Ribosomal_L13"/>
    <property type="match status" value="1"/>
</dbReference>
<dbReference type="SUPFAM" id="SSF52161">
    <property type="entry name" value="Ribosomal protein L13"/>
    <property type="match status" value="1"/>
</dbReference>
<proteinExistence type="inferred from homology"/>
<name>RL13_HALHL</name>
<sequence>MKTYSAKPAEVQRDWYLVDATDKTLGRLASEVAHRLRGKHKPVFTPHVDAGDYIVVINADKIRLTGRKERDKQYFWHTGFPGGIKSRSVAEVRERHPERLIESAVRGMMPKNRLGRAMLKKLKVYAGNEHRHHAQQPQPLEL</sequence>
<keyword id="KW-1185">Reference proteome</keyword>
<keyword id="KW-0687">Ribonucleoprotein</keyword>
<keyword id="KW-0689">Ribosomal protein</keyword>
<comment type="function">
    <text evidence="1">This protein is one of the early assembly proteins of the 50S ribosomal subunit, although it is not seen to bind rRNA by itself. It is important during the early stages of 50S assembly.</text>
</comment>
<comment type="subunit">
    <text evidence="1">Part of the 50S ribosomal subunit.</text>
</comment>
<comment type="similarity">
    <text evidence="1">Belongs to the universal ribosomal protein uL13 family.</text>
</comment>
<accession>A1WYS9</accession>